<reference key="1">
    <citation type="journal article" date="2008" name="BMC Genomics">
        <title>The genome of Aeromonas salmonicida subsp. salmonicida A449: insights into the evolution of a fish pathogen.</title>
        <authorList>
            <person name="Reith M.E."/>
            <person name="Singh R.K."/>
            <person name="Curtis B."/>
            <person name="Boyd J.M."/>
            <person name="Bouevitch A."/>
            <person name="Kimball J."/>
            <person name="Munholland J."/>
            <person name="Murphy C."/>
            <person name="Sarty D."/>
            <person name="Williams J."/>
            <person name="Nash J.H."/>
            <person name="Johnson S.C."/>
            <person name="Brown L.L."/>
        </authorList>
    </citation>
    <scope>NUCLEOTIDE SEQUENCE [LARGE SCALE GENOMIC DNA]</scope>
    <source>
        <strain>A449</strain>
    </source>
</reference>
<sequence length="1342" mass="150252">MVYSYTEKKRIRKDFGKRDQVLDTPYLLSIQLDSFKQFIEADPEGEYGLEAAFRSVFPITSYSGSAELQYVSYRLGEPVFDVKECQIRGVTYSAPLRVKLRMVLYDREAAAGTVKDIKEQEVYMGEIPLMTENGTFVINGTERVIVSQLHRSPGVFFDHDKGKTHSSGKVLYNARVIPYRGSWLDFEFDAKDNLFVRIDRRRKLPASIILRALDFSSEEILANFFETIGFEVKDGKLMMDLVPERLRGETATFDIVANGAVVVETGRRVTARHIRQLEKDAVTQIEVPVEYVVGKVAAKNYTHPQTGEMVVTANQALSLEAVANLSQAGFKHFEVLFTNELDHGAYMSETLRIDSSSSRLEALVEIYRMMRPGEPPTREAAEQLFENLFFSSERYDLSTVGRMKFNRRLSREDETGAGTLTKDDIVEVMKRLIDIRNGNDEVDDIDHLGNRRIRSVGEMAENQFRVGLVRVERAVKERLSLGDLDTLMPQDLINAKPISAAVKEFFGSSQLSQFMDQNNPLSEVTHKRRISALGPGGLTRERAGFEVRDVHPTHYGRLCPIETPEGPNIGLINSLSVYSRTNEYGFLETPYRKVIDGVITDEVDYLSAIEEGKYVIAQANAATTEDGRLKDELIPCRHKGESTFMNADQIQYMDVSPQQIVSVAAALIPFLEHDDANRALMGSNMQRQAVPTLRADKPLVGTGMERAVAVDSGVTVVAKRGGMIDYVDASRIVIKVNEDELLPGEAGIDIYSLTKYTRSNQNTCINQRPCVMLGEPVMAGDVVADGPSTDLGELALGQNLRVAFMPWNGYNFEDSILVNERVVQEDRLTTIHIQELACISRDTKLGPEEITADIPNVGEAALSKLDESGIVYVGAEVKGGDILVGKVTPKGETQLTPEEKLLRAIFGEKASDVKDSSLRVPNGVYGTVVDVQVFTRDGVEKDKRAKEIEEMQLKEAKKDLTEEFKILEDGIFGRSRNLLLAAGYSEDRLNKLDRTKWFELAIEDEAKQIELEQIAEQHIELKADFDKKFENKRRKIIQGDDLAPGVLKIVKVYLAVKRRIQPGDKMAGRHGNKGVISKICPVEDMPHDEYGRPVDIVLNPLGVPSRMNIGQILEVHLGLAAKGIGEKIDRMIKEQRALHEMRDFLQQVYDLGEKDTKQVDIAELSDDDVRTLVGNLRKGLPVATPVFDGAKEHEIKALLKLADLPESGQISLFDGRTGNVFERKVTVGYMYMLKLNHLVDDKMHARSTGSYSLVTQQPLGGKAQFGGQRFGEMEVWALEAYGAAYTLQEMLTVKSDDVNGRTKMYKNIVDGDHRMEPGMPESFNVLLKEIRSLGINIELDEE</sequence>
<name>RPOB_AERS4</name>
<keyword id="KW-0240">DNA-directed RNA polymerase</keyword>
<keyword id="KW-0548">Nucleotidyltransferase</keyword>
<keyword id="KW-0804">Transcription</keyword>
<keyword id="KW-0808">Transferase</keyword>
<accession>A4SHU9</accession>
<protein>
    <recommendedName>
        <fullName evidence="1">DNA-directed RNA polymerase subunit beta</fullName>
        <shortName evidence="1">RNAP subunit beta</shortName>
        <ecNumber evidence="1">2.7.7.6</ecNumber>
    </recommendedName>
    <alternativeName>
        <fullName evidence="1">RNA polymerase subunit beta</fullName>
    </alternativeName>
    <alternativeName>
        <fullName evidence="1">Transcriptase subunit beta</fullName>
    </alternativeName>
</protein>
<comment type="function">
    <text evidence="1">DNA-dependent RNA polymerase catalyzes the transcription of DNA into RNA using the four ribonucleoside triphosphates as substrates.</text>
</comment>
<comment type="catalytic activity">
    <reaction evidence="1">
        <text>RNA(n) + a ribonucleoside 5'-triphosphate = RNA(n+1) + diphosphate</text>
        <dbReference type="Rhea" id="RHEA:21248"/>
        <dbReference type="Rhea" id="RHEA-COMP:14527"/>
        <dbReference type="Rhea" id="RHEA-COMP:17342"/>
        <dbReference type="ChEBI" id="CHEBI:33019"/>
        <dbReference type="ChEBI" id="CHEBI:61557"/>
        <dbReference type="ChEBI" id="CHEBI:140395"/>
        <dbReference type="EC" id="2.7.7.6"/>
    </reaction>
</comment>
<comment type="subunit">
    <text evidence="1">The RNAP catalytic core consists of 2 alpha, 1 beta, 1 beta' and 1 omega subunit. When a sigma factor is associated with the core the holoenzyme is formed, which can initiate transcription.</text>
</comment>
<comment type="similarity">
    <text evidence="1">Belongs to the RNA polymerase beta chain family.</text>
</comment>
<comment type="sequence caution" evidence="2">
    <conflict type="erroneous initiation">
        <sequence resource="EMBL-CDS" id="ABO88471"/>
    </conflict>
</comment>
<feature type="chain" id="PRO_0000300274" description="DNA-directed RNA polymerase subunit beta">
    <location>
        <begin position="1"/>
        <end position="1342"/>
    </location>
</feature>
<organism>
    <name type="scientific">Aeromonas salmonicida (strain A449)</name>
    <dbReference type="NCBI Taxonomy" id="382245"/>
    <lineage>
        <taxon>Bacteria</taxon>
        <taxon>Pseudomonadati</taxon>
        <taxon>Pseudomonadota</taxon>
        <taxon>Gammaproteobacteria</taxon>
        <taxon>Aeromonadales</taxon>
        <taxon>Aeromonadaceae</taxon>
        <taxon>Aeromonas</taxon>
    </lineage>
</organism>
<gene>
    <name evidence="1" type="primary">rpoB</name>
    <name type="ordered locus">ASA_0283</name>
</gene>
<dbReference type="EC" id="2.7.7.6" evidence="1"/>
<dbReference type="EMBL" id="CP000644">
    <property type="protein sequence ID" value="ABO88471.1"/>
    <property type="status" value="ALT_INIT"/>
    <property type="molecule type" value="Genomic_DNA"/>
</dbReference>
<dbReference type="RefSeq" id="WP_005318568.1">
    <property type="nucleotide sequence ID" value="NC_009348.1"/>
</dbReference>
<dbReference type="SMR" id="A4SHU9"/>
<dbReference type="STRING" id="29491.GCA_000820065_03160"/>
<dbReference type="KEGG" id="asa:ASA_0283"/>
<dbReference type="eggNOG" id="COG0085">
    <property type="taxonomic scope" value="Bacteria"/>
</dbReference>
<dbReference type="HOGENOM" id="CLU_000524_4_0_6"/>
<dbReference type="Proteomes" id="UP000000225">
    <property type="component" value="Chromosome"/>
</dbReference>
<dbReference type="GO" id="GO:0000428">
    <property type="term" value="C:DNA-directed RNA polymerase complex"/>
    <property type="evidence" value="ECO:0007669"/>
    <property type="project" value="UniProtKB-KW"/>
</dbReference>
<dbReference type="GO" id="GO:0003677">
    <property type="term" value="F:DNA binding"/>
    <property type="evidence" value="ECO:0007669"/>
    <property type="project" value="UniProtKB-UniRule"/>
</dbReference>
<dbReference type="GO" id="GO:0003899">
    <property type="term" value="F:DNA-directed RNA polymerase activity"/>
    <property type="evidence" value="ECO:0007669"/>
    <property type="project" value="UniProtKB-UniRule"/>
</dbReference>
<dbReference type="GO" id="GO:0032549">
    <property type="term" value="F:ribonucleoside binding"/>
    <property type="evidence" value="ECO:0007669"/>
    <property type="project" value="InterPro"/>
</dbReference>
<dbReference type="GO" id="GO:0006351">
    <property type="term" value="P:DNA-templated transcription"/>
    <property type="evidence" value="ECO:0007669"/>
    <property type="project" value="UniProtKB-UniRule"/>
</dbReference>
<dbReference type="CDD" id="cd00653">
    <property type="entry name" value="RNA_pol_B_RPB2"/>
    <property type="match status" value="1"/>
</dbReference>
<dbReference type="FunFam" id="2.40.270.10:FF:000004">
    <property type="entry name" value="DNA-directed RNA polymerase subunit beta"/>
    <property type="match status" value="1"/>
</dbReference>
<dbReference type="FunFam" id="2.40.50.100:FF:000006">
    <property type="entry name" value="DNA-directed RNA polymerase subunit beta"/>
    <property type="match status" value="1"/>
</dbReference>
<dbReference type="FunFam" id="2.40.50.150:FF:000001">
    <property type="entry name" value="DNA-directed RNA polymerase subunit beta"/>
    <property type="match status" value="1"/>
</dbReference>
<dbReference type="FunFam" id="3.90.1100.10:FF:000002">
    <property type="entry name" value="DNA-directed RNA polymerase subunit beta"/>
    <property type="match status" value="1"/>
</dbReference>
<dbReference type="FunFam" id="3.90.1110.10:FF:000001">
    <property type="entry name" value="DNA-directed RNA polymerase subunit beta"/>
    <property type="match status" value="1"/>
</dbReference>
<dbReference type="FunFam" id="3.90.1110.10:FF:000004">
    <property type="entry name" value="DNA-directed RNA polymerase subunit beta"/>
    <property type="match status" value="1"/>
</dbReference>
<dbReference type="FunFam" id="3.90.1800.10:FF:000001">
    <property type="entry name" value="DNA-directed RNA polymerase subunit beta"/>
    <property type="match status" value="1"/>
</dbReference>
<dbReference type="Gene3D" id="2.40.50.100">
    <property type="match status" value="1"/>
</dbReference>
<dbReference type="Gene3D" id="2.40.50.150">
    <property type="match status" value="1"/>
</dbReference>
<dbReference type="Gene3D" id="3.90.1100.10">
    <property type="match status" value="2"/>
</dbReference>
<dbReference type="Gene3D" id="6.10.140.1670">
    <property type="match status" value="1"/>
</dbReference>
<dbReference type="Gene3D" id="2.30.150.10">
    <property type="entry name" value="DNA-directed RNA polymerase, beta subunit, external 1 domain"/>
    <property type="match status" value="1"/>
</dbReference>
<dbReference type="Gene3D" id="2.40.270.10">
    <property type="entry name" value="DNA-directed RNA polymerase, subunit 2, domain 6"/>
    <property type="match status" value="1"/>
</dbReference>
<dbReference type="Gene3D" id="3.90.1800.10">
    <property type="entry name" value="RNA polymerase alpha subunit dimerisation domain"/>
    <property type="match status" value="1"/>
</dbReference>
<dbReference type="Gene3D" id="3.90.1110.10">
    <property type="entry name" value="RNA polymerase Rpb2, domain 2"/>
    <property type="match status" value="1"/>
</dbReference>
<dbReference type="HAMAP" id="MF_01321">
    <property type="entry name" value="RNApol_bact_RpoB"/>
    <property type="match status" value="1"/>
</dbReference>
<dbReference type="InterPro" id="IPR042107">
    <property type="entry name" value="DNA-dir_RNA_pol_bsu_ext_1_sf"/>
</dbReference>
<dbReference type="InterPro" id="IPR019462">
    <property type="entry name" value="DNA-dir_RNA_pol_bsu_external_1"/>
</dbReference>
<dbReference type="InterPro" id="IPR015712">
    <property type="entry name" value="DNA-dir_RNA_pol_su2"/>
</dbReference>
<dbReference type="InterPro" id="IPR007120">
    <property type="entry name" value="DNA-dir_RNAP_su2_dom"/>
</dbReference>
<dbReference type="InterPro" id="IPR037033">
    <property type="entry name" value="DNA-dir_RNAP_su2_hyb_sf"/>
</dbReference>
<dbReference type="InterPro" id="IPR010243">
    <property type="entry name" value="RNA_pol_bsu_bac"/>
</dbReference>
<dbReference type="InterPro" id="IPR007121">
    <property type="entry name" value="RNA_pol_bsu_CS"/>
</dbReference>
<dbReference type="InterPro" id="IPR007644">
    <property type="entry name" value="RNA_pol_bsu_protrusion"/>
</dbReference>
<dbReference type="InterPro" id="IPR007642">
    <property type="entry name" value="RNA_pol_Rpb2_2"/>
</dbReference>
<dbReference type="InterPro" id="IPR037034">
    <property type="entry name" value="RNA_pol_Rpb2_2_sf"/>
</dbReference>
<dbReference type="InterPro" id="IPR007645">
    <property type="entry name" value="RNA_pol_Rpb2_3"/>
</dbReference>
<dbReference type="InterPro" id="IPR007641">
    <property type="entry name" value="RNA_pol_Rpb2_7"/>
</dbReference>
<dbReference type="InterPro" id="IPR014724">
    <property type="entry name" value="RNA_pol_RPB2_OB-fold"/>
</dbReference>
<dbReference type="NCBIfam" id="NF001616">
    <property type="entry name" value="PRK00405.1"/>
    <property type="match status" value="1"/>
</dbReference>
<dbReference type="NCBIfam" id="TIGR02013">
    <property type="entry name" value="rpoB"/>
    <property type="match status" value="1"/>
</dbReference>
<dbReference type="PANTHER" id="PTHR20856">
    <property type="entry name" value="DNA-DIRECTED RNA POLYMERASE I SUBUNIT 2"/>
    <property type="match status" value="1"/>
</dbReference>
<dbReference type="Pfam" id="PF04563">
    <property type="entry name" value="RNA_pol_Rpb2_1"/>
    <property type="match status" value="1"/>
</dbReference>
<dbReference type="Pfam" id="PF04561">
    <property type="entry name" value="RNA_pol_Rpb2_2"/>
    <property type="match status" value="2"/>
</dbReference>
<dbReference type="Pfam" id="PF04565">
    <property type="entry name" value="RNA_pol_Rpb2_3"/>
    <property type="match status" value="1"/>
</dbReference>
<dbReference type="Pfam" id="PF10385">
    <property type="entry name" value="RNA_pol_Rpb2_45"/>
    <property type="match status" value="1"/>
</dbReference>
<dbReference type="Pfam" id="PF00562">
    <property type="entry name" value="RNA_pol_Rpb2_6"/>
    <property type="match status" value="1"/>
</dbReference>
<dbReference type="Pfam" id="PF04560">
    <property type="entry name" value="RNA_pol_Rpb2_7"/>
    <property type="match status" value="1"/>
</dbReference>
<dbReference type="SUPFAM" id="SSF64484">
    <property type="entry name" value="beta and beta-prime subunits of DNA dependent RNA-polymerase"/>
    <property type="match status" value="1"/>
</dbReference>
<dbReference type="PROSITE" id="PS01166">
    <property type="entry name" value="RNA_POL_BETA"/>
    <property type="match status" value="1"/>
</dbReference>
<evidence type="ECO:0000255" key="1">
    <source>
        <dbReference type="HAMAP-Rule" id="MF_01321"/>
    </source>
</evidence>
<evidence type="ECO:0000305" key="2"/>
<proteinExistence type="inferred from homology"/>